<gene>
    <name type="primary">CAF4</name>
    <name type="ORF">Kpol_1016p11</name>
</gene>
<name>CAF4_VANPO</name>
<keyword id="KW-0175">Coiled coil</keyword>
<keyword id="KW-0472">Membrane</keyword>
<keyword id="KW-0496">Mitochondrion</keyword>
<keyword id="KW-1000">Mitochondrion outer membrane</keyword>
<keyword id="KW-1185">Reference proteome</keyword>
<keyword id="KW-0677">Repeat</keyword>
<keyword id="KW-0853">WD repeat</keyword>
<proteinExistence type="inferred from homology"/>
<feature type="chain" id="PRO_0000330611" description="CCR4-associated factor 4 homolog">
    <location>
        <begin position="1"/>
        <end position="669"/>
    </location>
</feature>
<feature type="repeat" description="WD 1">
    <location>
        <begin position="351"/>
        <end position="391"/>
    </location>
</feature>
<feature type="repeat" description="WD 2">
    <location>
        <begin position="394"/>
        <end position="433"/>
    </location>
</feature>
<feature type="repeat" description="WD 3">
    <location>
        <begin position="453"/>
        <end position="492"/>
    </location>
</feature>
<feature type="repeat" description="WD 4">
    <location>
        <begin position="516"/>
        <end position="557"/>
    </location>
</feature>
<feature type="repeat" description="WD 5">
    <location>
        <begin position="558"/>
        <end position="595"/>
    </location>
</feature>
<feature type="repeat" description="WD 6">
    <location>
        <begin position="597"/>
        <end position="634"/>
    </location>
</feature>
<feature type="repeat" description="WD 7">
    <location>
        <begin position="640"/>
        <end position="669"/>
    </location>
</feature>
<feature type="coiled-coil region" evidence="2">
    <location>
        <begin position="189"/>
        <end position="222"/>
    </location>
</feature>
<accession>A7TNS8</accession>
<comment type="function">
    <text evidence="1">Involved in mitochondrial fission. Has a partially redundant function to MDV1 in acting as an adapter protein required to form mitochondrial fission complexes. Formation of these complexes is required to promote constriction and fission of the mitochondrial compartment at a late step in mitochondrial division (By similarity).</text>
</comment>
<comment type="subcellular location">
    <subcellularLocation>
        <location evidence="1">Mitochondrion outer membrane</location>
        <topology evidence="1">Peripheral membrane protein</topology>
        <orientation evidence="1">Cytoplasmic side</orientation>
    </subcellularLocation>
</comment>
<comment type="similarity">
    <text evidence="3">Belongs to the WD repeat MDV1/CAF4 family.</text>
</comment>
<reference key="1">
    <citation type="journal article" date="2007" name="Proc. Natl. Acad. Sci. U.S.A.">
        <title>Independent sorting-out of thousands of duplicated gene pairs in two yeast species descended from a whole-genome duplication.</title>
        <authorList>
            <person name="Scannell D.R."/>
            <person name="Frank A.C."/>
            <person name="Conant G.C."/>
            <person name="Byrne K.P."/>
            <person name="Woolfit M."/>
            <person name="Wolfe K.H."/>
        </authorList>
    </citation>
    <scope>NUCLEOTIDE SEQUENCE [LARGE SCALE GENOMIC DNA]</scope>
    <source>
        <strain>ATCC 22028 / DSM 70294 / BCRC 21397 / CBS 2163 / NBRC 10782 / NRRL Y-8283 / UCD 57-17</strain>
    </source>
</reference>
<protein>
    <recommendedName>
        <fullName>CCR4-associated factor 4 homolog</fullName>
    </recommendedName>
</protein>
<evidence type="ECO:0000250" key="1"/>
<evidence type="ECO:0000255" key="2"/>
<evidence type="ECO:0000305" key="3"/>
<sequence length="669" mass="76622">MVGLHFDRGPVKHVDIGWRVPNLLRELLDGIGKEYSLQKCIPITVLEKVLWKYQSIDNVAALSGKEYSRVQLCGPKCAFRILCNIPSDQLVIPDIEKYNEFNVNKTLYEGFLLALDTIQHTFNSQLFNDSPPHELNSKAESSVSHTAEDYFDSYISNFSRISETNLEKLHSRRELKNIECDAKKSLKILNAYDKLYDDQLDELEKKLEDIQYKQHALRQKKGTILSTSEKLNNMIYISKQSRKNIEEVSLLLKYDMNKKSSSVYSGWETTNLLSKSELAFGFNENNNNYNDDSLGEEDANDESENYDTFNLEGKNSRYSGSSVDYISEDTRQQKAKNKHEIGTVLSALKNAHENNITCLDFDEPFGTLYSAGQLDNTIKVWDLSSSKFIGSFNAHLSTINCMQLDTQQQIIISGGRDSLVRLWDIKKFQDYSTNYNDIENYYEETNCIFECDSHSDEISSISYDNFNLLTGSQDKTIKHWDLITGKCVQTFDVSFYLNNSPPFENKFSPTKKNYFAHSEAPTIGSLQCFESALASGTKDGLIRLWDLRSGKVIRILEGHTDAITSLKFDMTNLITGSLDKNIRIWDMRNWSLVNSYGYQSPVWSLDFNSANVVSATGGKTSEIFRRKENNHCIPNENYSFIKSEVQFVKYKEDWLIEGRSNGDIEILTI</sequence>
<organism>
    <name type="scientific">Vanderwaltozyma polyspora (strain ATCC 22028 / DSM 70294 / BCRC 21397 / CBS 2163 / NBRC 10782 / NRRL Y-8283 / UCD 57-17)</name>
    <name type="common">Kluyveromyces polysporus</name>
    <dbReference type="NCBI Taxonomy" id="436907"/>
    <lineage>
        <taxon>Eukaryota</taxon>
        <taxon>Fungi</taxon>
        <taxon>Dikarya</taxon>
        <taxon>Ascomycota</taxon>
        <taxon>Saccharomycotina</taxon>
        <taxon>Saccharomycetes</taxon>
        <taxon>Saccharomycetales</taxon>
        <taxon>Saccharomycetaceae</taxon>
        <taxon>Vanderwaltozyma</taxon>
    </lineage>
</organism>
<dbReference type="EMBL" id="DS480434">
    <property type="protein sequence ID" value="EDO16071.1"/>
    <property type="molecule type" value="Genomic_DNA"/>
</dbReference>
<dbReference type="RefSeq" id="XP_001643929.1">
    <property type="nucleotide sequence ID" value="XM_001643879.1"/>
</dbReference>
<dbReference type="SMR" id="A7TNS8"/>
<dbReference type="STRING" id="436907.A7TNS8"/>
<dbReference type="GeneID" id="5544194"/>
<dbReference type="KEGG" id="vpo:Kpol_1016p11"/>
<dbReference type="eggNOG" id="KOG4155">
    <property type="taxonomic scope" value="Eukaryota"/>
</dbReference>
<dbReference type="HOGENOM" id="CLU_012350_1_0_1"/>
<dbReference type="InParanoid" id="A7TNS8"/>
<dbReference type="OrthoDB" id="496at2759"/>
<dbReference type="PhylomeDB" id="A7TNS8"/>
<dbReference type="Proteomes" id="UP000000267">
    <property type="component" value="Unassembled WGS sequence"/>
</dbReference>
<dbReference type="GO" id="GO:0005741">
    <property type="term" value="C:mitochondrial outer membrane"/>
    <property type="evidence" value="ECO:0007669"/>
    <property type="project" value="UniProtKB-SubCell"/>
</dbReference>
<dbReference type="GO" id="GO:0000266">
    <property type="term" value="P:mitochondrial fission"/>
    <property type="evidence" value="ECO:0007669"/>
    <property type="project" value="TreeGrafter"/>
</dbReference>
<dbReference type="GO" id="GO:0016559">
    <property type="term" value="P:peroxisome fission"/>
    <property type="evidence" value="ECO:0007669"/>
    <property type="project" value="TreeGrafter"/>
</dbReference>
<dbReference type="CDD" id="cd00200">
    <property type="entry name" value="WD40"/>
    <property type="match status" value="1"/>
</dbReference>
<dbReference type="Gene3D" id="2.130.10.10">
    <property type="entry name" value="YVTN repeat-like/Quinoprotein amine dehydrogenase"/>
    <property type="match status" value="2"/>
</dbReference>
<dbReference type="InterPro" id="IPR020472">
    <property type="entry name" value="G-protein_beta_WD-40_rep"/>
</dbReference>
<dbReference type="InterPro" id="IPR015943">
    <property type="entry name" value="WD40/YVTN_repeat-like_dom_sf"/>
</dbReference>
<dbReference type="InterPro" id="IPR019775">
    <property type="entry name" value="WD40_repeat_CS"/>
</dbReference>
<dbReference type="InterPro" id="IPR036322">
    <property type="entry name" value="WD40_repeat_dom_sf"/>
</dbReference>
<dbReference type="InterPro" id="IPR001680">
    <property type="entry name" value="WD40_rpt"/>
</dbReference>
<dbReference type="PANTHER" id="PTHR19855:SF28">
    <property type="entry name" value="CCR4-ASSOCIATED FACTOR 4"/>
    <property type="match status" value="1"/>
</dbReference>
<dbReference type="PANTHER" id="PTHR19855">
    <property type="entry name" value="WD40 REPEAT PROTEIN 12, 37"/>
    <property type="match status" value="1"/>
</dbReference>
<dbReference type="Pfam" id="PF00400">
    <property type="entry name" value="WD40"/>
    <property type="match status" value="4"/>
</dbReference>
<dbReference type="PRINTS" id="PR00320">
    <property type="entry name" value="GPROTEINBRPT"/>
</dbReference>
<dbReference type="SMART" id="SM00320">
    <property type="entry name" value="WD40"/>
    <property type="match status" value="6"/>
</dbReference>
<dbReference type="SUPFAM" id="SSF50978">
    <property type="entry name" value="WD40 repeat-like"/>
    <property type="match status" value="1"/>
</dbReference>
<dbReference type="PROSITE" id="PS00678">
    <property type="entry name" value="WD_REPEATS_1"/>
    <property type="match status" value="3"/>
</dbReference>
<dbReference type="PROSITE" id="PS50082">
    <property type="entry name" value="WD_REPEATS_2"/>
    <property type="match status" value="5"/>
</dbReference>
<dbReference type="PROSITE" id="PS50294">
    <property type="entry name" value="WD_REPEATS_REGION"/>
    <property type="match status" value="1"/>
</dbReference>